<accession>B7UH09</accession>
<comment type="function">
    <text evidence="1">Required for accurate and efficient protein synthesis under certain stress conditions. May act as a fidelity factor of the translation reaction, by catalyzing a one-codon backward translocation of tRNAs on improperly translocated ribosomes. Back-translocation proceeds from a post-translocation (POST) complex to a pre-translocation (PRE) complex, thus giving elongation factor G a second chance to translocate the tRNAs correctly. Binds to ribosomes in a GTP-dependent manner.</text>
</comment>
<comment type="catalytic activity">
    <reaction evidence="1">
        <text>GTP + H2O = GDP + phosphate + H(+)</text>
        <dbReference type="Rhea" id="RHEA:19669"/>
        <dbReference type="ChEBI" id="CHEBI:15377"/>
        <dbReference type="ChEBI" id="CHEBI:15378"/>
        <dbReference type="ChEBI" id="CHEBI:37565"/>
        <dbReference type="ChEBI" id="CHEBI:43474"/>
        <dbReference type="ChEBI" id="CHEBI:58189"/>
        <dbReference type="EC" id="3.6.5.n1"/>
    </reaction>
</comment>
<comment type="subcellular location">
    <subcellularLocation>
        <location evidence="1">Cell inner membrane</location>
        <topology evidence="1">Peripheral membrane protein</topology>
        <orientation evidence="1">Cytoplasmic side</orientation>
    </subcellularLocation>
</comment>
<comment type="similarity">
    <text evidence="1">Belongs to the TRAFAC class translation factor GTPase superfamily. Classic translation factor GTPase family. LepA subfamily.</text>
</comment>
<name>LEPA_ECO27</name>
<organism>
    <name type="scientific">Escherichia coli O127:H6 (strain E2348/69 / EPEC)</name>
    <dbReference type="NCBI Taxonomy" id="574521"/>
    <lineage>
        <taxon>Bacteria</taxon>
        <taxon>Pseudomonadati</taxon>
        <taxon>Pseudomonadota</taxon>
        <taxon>Gammaproteobacteria</taxon>
        <taxon>Enterobacterales</taxon>
        <taxon>Enterobacteriaceae</taxon>
        <taxon>Escherichia</taxon>
    </lineage>
</organism>
<keyword id="KW-0997">Cell inner membrane</keyword>
<keyword id="KW-1003">Cell membrane</keyword>
<keyword id="KW-0342">GTP-binding</keyword>
<keyword id="KW-0378">Hydrolase</keyword>
<keyword id="KW-0472">Membrane</keyword>
<keyword id="KW-0547">Nucleotide-binding</keyword>
<keyword id="KW-0648">Protein biosynthesis</keyword>
<keyword id="KW-1185">Reference proteome</keyword>
<gene>
    <name evidence="1" type="primary">lepA</name>
    <name type="ordered locus">E2348C_2846</name>
</gene>
<protein>
    <recommendedName>
        <fullName evidence="1">Elongation factor 4</fullName>
        <shortName evidence="1">EF-4</shortName>
        <ecNumber evidence="1">3.6.5.n1</ecNumber>
    </recommendedName>
    <alternativeName>
        <fullName evidence="1">Ribosomal back-translocase LepA</fullName>
    </alternativeName>
</protein>
<reference key="1">
    <citation type="journal article" date="2009" name="J. Bacteriol.">
        <title>Complete genome sequence and comparative genome analysis of enteropathogenic Escherichia coli O127:H6 strain E2348/69.</title>
        <authorList>
            <person name="Iguchi A."/>
            <person name="Thomson N.R."/>
            <person name="Ogura Y."/>
            <person name="Saunders D."/>
            <person name="Ooka T."/>
            <person name="Henderson I.R."/>
            <person name="Harris D."/>
            <person name="Asadulghani M."/>
            <person name="Kurokawa K."/>
            <person name="Dean P."/>
            <person name="Kenny B."/>
            <person name="Quail M.A."/>
            <person name="Thurston S."/>
            <person name="Dougan G."/>
            <person name="Hayashi T."/>
            <person name="Parkhill J."/>
            <person name="Frankel G."/>
        </authorList>
    </citation>
    <scope>NUCLEOTIDE SEQUENCE [LARGE SCALE GENOMIC DNA]</scope>
    <source>
        <strain>E2348/69 / EPEC</strain>
    </source>
</reference>
<sequence length="599" mass="66512">MKNIRNFSIIAHIDHGKSTLSDRIIQICGGLSDREMEAQVLDSMDLERERGITIKAQSVTLDYKASDGETYQLNFIDTPGHVDFSYEVSRSLAACEGALLVVDAGQGVEAQTLANCYTAMEMDLEVVPVLNKIDLPAADPERVAEEIEDIVGIDATDAVRCSAKTGVGVQDVLERLVRDIPPPEGDPEGPLQALIIDSWFDNYLGVVSLIRIKNGTLRKGDKVKVMSTGQTYNADRLGIFTPKQVDRTELKCGEVGWLVCAIKDIHGAPVGDTLTLARNPAEKALPGFKKVKPQVYAGLFPVSSDDYEAFRDALGKLSLNDASLFYEPESSSALGFGFRCGFLGLLHMEIIQERLEREYDLDLITTAPTVVYEVETTSREVIYVDSPSKLPAVNNIYELREPIAECHMLLPQAYLGNVITLCVEKRGVQTNMVYHGNQVALTYEIPMAEVVLDFFDRLKSTSRGYASLDYNFKRFQASDMVRVDVLINGERVDALALITHRGNSQNRGRELVEKMKDLIPRQQFDIAIQAAIGTHIIARSTVKQLRKNVLAKCYGGDISRKKKLLQKQKEGKKRMKQIGNVELPQEAFLAILHVGKDNK</sequence>
<proteinExistence type="inferred from homology"/>
<feature type="chain" id="PRO_1000190811" description="Elongation factor 4">
    <location>
        <begin position="1"/>
        <end position="599"/>
    </location>
</feature>
<feature type="domain" description="tr-type G">
    <location>
        <begin position="2"/>
        <end position="184"/>
    </location>
</feature>
<feature type="binding site" evidence="1">
    <location>
        <begin position="14"/>
        <end position="19"/>
    </location>
    <ligand>
        <name>GTP</name>
        <dbReference type="ChEBI" id="CHEBI:37565"/>
    </ligand>
</feature>
<feature type="binding site" evidence="1">
    <location>
        <begin position="131"/>
        <end position="134"/>
    </location>
    <ligand>
        <name>GTP</name>
        <dbReference type="ChEBI" id="CHEBI:37565"/>
    </ligand>
</feature>
<evidence type="ECO:0000255" key="1">
    <source>
        <dbReference type="HAMAP-Rule" id="MF_00071"/>
    </source>
</evidence>
<dbReference type="EC" id="3.6.5.n1" evidence="1"/>
<dbReference type="EMBL" id="FM180568">
    <property type="protein sequence ID" value="CAS10394.1"/>
    <property type="molecule type" value="Genomic_DNA"/>
</dbReference>
<dbReference type="RefSeq" id="WP_000790169.1">
    <property type="nucleotide sequence ID" value="NC_011601.1"/>
</dbReference>
<dbReference type="SMR" id="B7UH09"/>
<dbReference type="KEGG" id="ecg:E2348C_2846"/>
<dbReference type="HOGENOM" id="CLU_009995_3_3_6"/>
<dbReference type="Proteomes" id="UP000008205">
    <property type="component" value="Chromosome"/>
</dbReference>
<dbReference type="GO" id="GO:0005886">
    <property type="term" value="C:plasma membrane"/>
    <property type="evidence" value="ECO:0007669"/>
    <property type="project" value="UniProtKB-SubCell"/>
</dbReference>
<dbReference type="GO" id="GO:0005525">
    <property type="term" value="F:GTP binding"/>
    <property type="evidence" value="ECO:0007669"/>
    <property type="project" value="UniProtKB-UniRule"/>
</dbReference>
<dbReference type="GO" id="GO:0003924">
    <property type="term" value="F:GTPase activity"/>
    <property type="evidence" value="ECO:0007669"/>
    <property type="project" value="UniProtKB-UniRule"/>
</dbReference>
<dbReference type="GO" id="GO:0097216">
    <property type="term" value="F:guanosine tetraphosphate binding"/>
    <property type="evidence" value="ECO:0007669"/>
    <property type="project" value="UniProtKB-ARBA"/>
</dbReference>
<dbReference type="GO" id="GO:0043022">
    <property type="term" value="F:ribosome binding"/>
    <property type="evidence" value="ECO:0007669"/>
    <property type="project" value="UniProtKB-UniRule"/>
</dbReference>
<dbReference type="GO" id="GO:0003746">
    <property type="term" value="F:translation elongation factor activity"/>
    <property type="evidence" value="ECO:0007669"/>
    <property type="project" value="UniProtKB-UniRule"/>
</dbReference>
<dbReference type="GO" id="GO:0045727">
    <property type="term" value="P:positive regulation of translation"/>
    <property type="evidence" value="ECO:0007669"/>
    <property type="project" value="UniProtKB-UniRule"/>
</dbReference>
<dbReference type="CDD" id="cd03699">
    <property type="entry name" value="EF4_II"/>
    <property type="match status" value="1"/>
</dbReference>
<dbReference type="CDD" id="cd16260">
    <property type="entry name" value="EF4_III"/>
    <property type="match status" value="1"/>
</dbReference>
<dbReference type="CDD" id="cd01890">
    <property type="entry name" value="LepA"/>
    <property type="match status" value="1"/>
</dbReference>
<dbReference type="CDD" id="cd03709">
    <property type="entry name" value="lepA_C"/>
    <property type="match status" value="1"/>
</dbReference>
<dbReference type="FunFam" id="3.30.70.240:FF:000005">
    <property type="entry name" value="Elongation factor 4"/>
    <property type="match status" value="1"/>
</dbReference>
<dbReference type="FunFam" id="3.40.50.300:FF:000078">
    <property type="entry name" value="Elongation factor 4"/>
    <property type="match status" value="1"/>
</dbReference>
<dbReference type="FunFam" id="2.40.30.10:FF:000015">
    <property type="entry name" value="Translation factor GUF1, mitochondrial"/>
    <property type="match status" value="1"/>
</dbReference>
<dbReference type="FunFam" id="3.30.70.2570:FF:000001">
    <property type="entry name" value="Translation factor GUF1, mitochondrial"/>
    <property type="match status" value="1"/>
</dbReference>
<dbReference type="FunFam" id="3.30.70.870:FF:000004">
    <property type="entry name" value="Translation factor GUF1, mitochondrial"/>
    <property type="match status" value="1"/>
</dbReference>
<dbReference type="Gene3D" id="3.30.70.240">
    <property type="match status" value="1"/>
</dbReference>
<dbReference type="Gene3D" id="3.30.70.2570">
    <property type="entry name" value="Elongation factor 4, C-terminal domain"/>
    <property type="match status" value="1"/>
</dbReference>
<dbReference type="Gene3D" id="3.30.70.870">
    <property type="entry name" value="Elongation Factor G (Translational Gtpase), domain 3"/>
    <property type="match status" value="1"/>
</dbReference>
<dbReference type="Gene3D" id="3.40.50.300">
    <property type="entry name" value="P-loop containing nucleotide triphosphate hydrolases"/>
    <property type="match status" value="1"/>
</dbReference>
<dbReference type="Gene3D" id="2.40.30.10">
    <property type="entry name" value="Translation factors"/>
    <property type="match status" value="1"/>
</dbReference>
<dbReference type="HAMAP" id="MF_00071">
    <property type="entry name" value="LepA"/>
    <property type="match status" value="1"/>
</dbReference>
<dbReference type="InterPro" id="IPR006297">
    <property type="entry name" value="EF-4"/>
</dbReference>
<dbReference type="InterPro" id="IPR035647">
    <property type="entry name" value="EFG_III/V"/>
</dbReference>
<dbReference type="InterPro" id="IPR000640">
    <property type="entry name" value="EFG_V-like"/>
</dbReference>
<dbReference type="InterPro" id="IPR004161">
    <property type="entry name" value="EFTu-like_2"/>
</dbReference>
<dbReference type="InterPro" id="IPR031157">
    <property type="entry name" value="G_TR_CS"/>
</dbReference>
<dbReference type="InterPro" id="IPR038363">
    <property type="entry name" value="LepA_C_sf"/>
</dbReference>
<dbReference type="InterPro" id="IPR013842">
    <property type="entry name" value="LepA_CTD"/>
</dbReference>
<dbReference type="InterPro" id="IPR035654">
    <property type="entry name" value="LepA_IV"/>
</dbReference>
<dbReference type="InterPro" id="IPR027417">
    <property type="entry name" value="P-loop_NTPase"/>
</dbReference>
<dbReference type="InterPro" id="IPR005225">
    <property type="entry name" value="Small_GTP-bd"/>
</dbReference>
<dbReference type="InterPro" id="IPR000795">
    <property type="entry name" value="T_Tr_GTP-bd_dom"/>
</dbReference>
<dbReference type="NCBIfam" id="TIGR01393">
    <property type="entry name" value="lepA"/>
    <property type="match status" value="1"/>
</dbReference>
<dbReference type="NCBIfam" id="TIGR00231">
    <property type="entry name" value="small_GTP"/>
    <property type="match status" value="1"/>
</dbReference>
<dbReference type="PANTHER" id="PTHR43512:SF4">
    <property type="entry name" value="TRANSLATION FACTOR GUF1 HOMOLOG, CHLOROPLASTIC"/>
    <property type="match status" value="1"/>
</dbReference>
<dbReference type="PANTHER" id="PTHR43512">
    <property type="entry name" value="TRANSLATION FACTOR GUF1-RELATED"/>
    <property type="match status" value="1"/>
</dbReference>
<dbReference type="Pfam" id="PF00679">
    <property type="entry name" value="EFG_C"/>
    <property type="match status" value="1"/>
</dbReference>
<dbReference type="Pfam" id="PF00009">
    <property type="entry name" value="GTP_EFTU"/>
    <property type="match status" value="1"/>
</dbReference>
<dbReference type="Pfam" id="PF03144">
    <property type="entry name" value="GTP_EFTU_D2"/>
    <property type="match status" value="1"/>
</dbReference>
<dbReference type="Pfam" id="PF06421">
    <property type="entry name" value="LepA_C"/>
    <property type="match status" value="1"/>
</dbReference>
<dbReference type="PRINTS" id="PR00315">
    <property type="entry name" value="ELONGATNFCT"/>
</dbReference>
<dbReference type="SUPFAM" id="SSF54980">
    <property type="entry name" value="EF-G C-terminal domain-like"/>
    <property type="match status" value="2"/>
</dbReference>
<dbReference type="SUPFAM" id="SSF52540">
    <property type="entry name" value="P-loop containing nucleoside triphosphate hydrolases"/>
    <property type="match status" value="1"/>
</dbReference>
<dbReference type="PROSITE" id="PS00301">
    <property type="entry name" value="G_TR_1"/>
    <property type="match status" value="1"/>
</dbReference>
<dbReference type="PROSITE" id="PS51722">
    <property type="entry name" value="G_TR_2"/>
    <property type="match status" value="1"/>
</dbReference>